<accession>B1JKK5</accession>
<comment type="similarity">
    <text evidence="1">Belongs to the UPF0482 family.</text>
</comment>
<evidence type="ECO:0000255" key="1">
    <source>
        <dbReference type="HAMAP-Rule" id="MF_01581"/>
    </source>
</evidence>
<evidence type="ECO:0000256" key="2">
    <source>
        <dbReference type="SAM" id="MobiDB-lite"/>
    </source>
</evidence>
<gene>
    <name type="ordered locus">YPK_1977</name>
</gene>
<feature type="signal peptide" evidence="1">
    <location>
        <begin position="1"/>
        <end position="32"/>
    </location>
</feature>
<feature type="chain" id="PRO_5000315824" description="UPF0482 protein YPK_1977">
    <location>
        <begin position="33"/>
        <end position="124"/>
    </location>
</feature>
<feature type="region of interest" description="Disordered" evidence="2">
    <location>
        <begin position="47"/>
        <end position="69"/>
    </location>
</feature>
<organism>
    <name type="scientific">Yersinia pseudotuberculosis serotype O:3 (strain YPIII)</name>
    <dbReference type="NCBI Taxonomy" id="502800"/>
    <lineage>
        <taxon>Bacteria</taxon>
        <taxon>Pseudomonadati</taxon>
        <taxon>Pseudomonadota</taxon>
        <taxon>Gammaproteobacteria</taxon>
        <taxon>Enterobacterales</taxon>
        <taxon>Yersiniaceae</taxon>
        <taxon>Yersinia</taxon>
    </lineage>
</organism>
<sequence length="124" mass="14194">MMKINNLPRLIRAFLPATLLMLPLVWQTPALAQSASCTQGSTCVSVGGNNDPMSKEQARQSQQQWDETNRLRNKMNNRVEKDFDKNDRAVDAKDNCERSDNLNAYWEPNTQRCLDRLSGRKINP</sequence>
<dbReference type="EMBL" id="CP000950">
    <property type="protein sequence ID" value="ACA68266.1"/>
    <property type="molecule type" value="Genomic_DNA"/>
</dbReference>
<dbReference type="SMR" id="B1JKK5"/>
<dbReference type="KEGG" id="ypy:YPK_1977"/>
<dbReference type="HAMAP" id="MF_01581">
    <property type="entry name" value="UPF0482"/>
    <property type="match status" value="1"/>
</dbReference>
<dbReference type="InterPro" id="IPR009700">
    <property type="entry name" value="DUF1283"/>
</dbReference>
<dbReference type="NCBIfam" id="NF010180">
    <property type="entry name" value="PRK13659.1"/>
    <property type="match status" value="1"/>
</dbReference>
<dbReference type="Pfam" id="PF06932">
    <property type="entry name" value="DUF1283"/>
    <property type="match status" value="1"/>
</dbReference>
<proteinExistence type="inferred from homology"/>
<name>Y1977_YERPY</name>
<protein>
    <recommendedName>
        <fullName evidence="1">UPF0482 protein YPK_1977</fullName>
    </recommendedName>
</protein>
<keyword id="KW-0732">Signal</keyword>
<reference key="1">
    <citation type="submission" date="2008-02" db="EMBL/GenBank/DDBJ databases">
        <title>Complete sequence of Yersinia pseudotuberculosis YPIII.</title>
        <authorList>
            <consortium name="US DOE Joint Genome Institute"/>
            <person name="Copeland A."/>
            <person name="Lucas S."/>
            <person name="Lapidus A."/>
            <person name="Glavina del Rio T."/>
            <person name="Dalin E."/>
            <person name="Tice H."/>
            <person name="Bruce D."/>
            <person name="Goodwin L."/>
            <person name="Pitluck S."/>
            <person name="Munk A.C."/>
            <person name="Brettin T."/>
            <person name="Detter J.C."/>
            <person name="Han C."/>
            <person name="Tapia R."/>
            <person name="Schmutz J."/>
            <person name="Larimer F."/>
            <person name="Land M."/>
            <person name="Hauser L."/>
            <person name="Challacombe J.F."/>
            <person name="Green L."/>
            <person name="Lindler L.E."/>
            <person name="Nikolich M.P."/>
            <person name="Richardson P."/>
        </authorList>
    </citation>
    <scope>NUCLEOTIDE SEQUENCE [LARGE SCALE GENOMIC DNA]</scope>
    <source>
        <strain>YPIII</strain>
    </source>
</reference>